<proteinExistence type="inferred from homology"/>
<comment type="function">
    <text evidence="1">Catalyzes the condensation of ATP and 5-phosphoribose 1-diphosphate to form N'-(5'-phosphoribosyl)-ATP (PR-ATP). Has a crucial role in the pathway because the rate of histidine biosynthesis seems to be controlled primarily by regulation of HisG enzymatic activity.</text>
</comment>
<comment type="catalytic activity">
    <reaction evidence="1">
        <text>1-(5-phospho-beta-D-ribosyl)-ATP + diphosphate = 5-phospho-alpha-D-ribose 1-diphosphate + ATP</text>
        <dbReference type="Rhea" id="RHEA:18473"/>
        <dbReference type="ChEBI" id="CHEBI:30616"/>
        <dbReference type="ChEBI" id="CHEBI:33019"/>
        <dbReference type="ChEBI" id="CHEBI:58017"/>
        <dbReference type="ChEBI" id="CHEBI:73183"/>
        <dbReference type="EC" id="2.4.2.17"/>
    </reaction>
</comment>
<comment type="pathway">
    <text evidence="1">Amino-acid biosynthesis; L-histidine biosynthesis; L-histidine from 5-phospho-alpha-D-ribose 1-diphosphate: step 1/9.</text>
</comment>
<comment type="subunit">
    <text evidence="1">Heteromultimer composed of HisG and HisZ subunits.</text>
</comment>
<comment type="subcellular location">
    <subcellularLocation>
        <location evidence="1">Cytoplasm</location>
    </subcellularLocation>
</comment>
<comment type="domain">
    <text>Lacks the C-terminal regulatory region which is replaced by HisZ.</text>
</comment>
<comment type="similarity">
    <text evidence="1">Belongs to the ATP phosphoribosyltransferase family. Short subfamily.</text>
</comment>
<sequence>MQDNALTIALSKGRIFEETLPLLAAAGIAPTEEPEKSRKLIIGTNHENIRLVIVRATDVPTYVRYGAADFGIAGKDVLIEHGGTGLYRPLDLEIAKCRMMVAVRKGFDYEAASQPGCRLKIATKYPEIAASHFAGKGVHVDIIKLYGSMELAPLVGLSDAIVDLVSTGNTLKANGLEAVEHIVDISSYLVVNKAALKTKYALLEPIIQSFGGAVKAKWAFI</sequence>
<evidence type="ECO:0000255" key="1">
    <source>
        <dbReference type="HAMAP-Rule" id="MF_01018"/>
    </source>
</evidence>
<protein>
    <recommendedName>
        <fullName evidence="1">ATP phosphoribosyltransferase</fullName>
        <shortName evidence="1">ATP-PRT</shortName>
        <shortName evidence="1">ATP-PRTase</shortName>
        <ecNumber evidence="1">2.4.2.17</ecNumber>
    </recommendedName>
</protein>
<reference key="1">
    <citation type="submission" date="2003-03" db="EMBL/GenBank/DDBJ databases">
        <title>The complete genome sequence of Neisseria gonorrhoeae.</title>
        <authorList>
            <person name="Lewis L.A."/>
            <person name="Gillaspy A.F."/>
            <person name="McLaughlin R.E."/>
            <person name="Gipson M."/>
            <person name="Ducey T.F."/>
            <person name="Ownbey T."/>
            <person name="Hartman K."/>
            <person name="Nydick C."/>
            <person name="Carson M.B."/>
            <person name="Vaughn J."/>
            <person name="Thomson C."/>
            <person name="Song L."/>
            <person name="Lin S."/>
            <person name="Yuan X."/>
            <person name="Najar F."/>
            <person name="Zhan M."/>
            <person name="Ren Q."/>
            <person name="Zhu H."/>
            <person name="Qi S."/>
            <person name="Kenton S.M."/>
            <person name="Lai H."/>
            <person name="White J.D."/>
            <person name="Clifton S."/>
            <person name="Roe B.A."/>
            <person name="Dyer D.W."/>
        </authorList>
    </citation>
    <scope>NUCLEOTIDE SEQUENCE [LARGE SCALE GENOMIC DNA]</scope>
    <source>
        <strain>ATCC 700825 / FA 1090</strain>
    </source>
</reference>
<organism>
    <name type="scientific">Neisseria gonorrhoeae (strain ATCC 700825 / FA 1090)</name>
    <dbReference type="NCBI Taxonomy" id="242231"/>
    <lineage>
        <taxon>Bacteria</taxon>
        <taxon>Pseudomonadati</taxon>
        <taxon>Pseudomonadota</taxon>
        <taxon>Betaproteobacteria</taxon>
        <taxon>Neisseriales</taxon>
        <taxon>Neisseriaceae</taxon>
        <taxon>Neisseria</taxon>
    </lineage>
</organism>
<name>HIS1_NEIG1</name>
<feature type="chain" id="PRO_0000229320" description="ATP phosphoribosyltransferase">
    <location>
        <begin position="1"/>
        <end position="221"/>
    </location>
</feature>
<accession>Q5F7E0</accession>
<dbReference type="EC" id="2.4.2.17" evidence="1"/>
<dbReference type="EMBL" id="AE004969">
    <property type="protein sequence ID" value="AAW89897.1"/>
    <property type="molecule type" value="Genomic_DNA"/>
</dbReference>
<dbReference type="RefSeq" id="WP_003689692.1">
    <property type="nucleotide sequence ID" value="NC_002946.2"/>
</dbReference>
<dbReference type="RefSeq" id="YP_208309.1">
    <property type="nucleotide sequence ID" value="NC_002946.2"/>
</dbReference>
<dbReference type="SMR" id="Q5F7E0"/>
<dbReference type="STRING" id="242231.NGO_1238"/>
<dbReference type="GeneID" id="66752481"/>
<dbReference type="KEGG" id="ngo:NGO_1238"/>
<dbReference type="PATRIC" id="fig|242231.10.peg.1457"/>
<dbReference type="HOGENOM" id="CLU_038115_2_0_4"/>
<dbReference type="UniPathway" id="UPA00031">
    <property type="reaction ID" value="UER00006"/>
</dbReference>
<dbReference type="Proteomes" id="UP000000535">
    <property type="component" value="Chromosome"/>
</dbReference>
<dbReference type="GO" id="GO:0005737">
    <property type="term" value="C:cytoplasm"/>
    <property type="evidence" value="ECO:0007669"/>
    <property type="project" value="UniProtKB-SubCell"/>
</dbReference>
<dbReference type="GO" id="GO:0005524">
    <property type="term" value="F:ATP binding"/>
    <property type="evidence" value="ECO:0007669"/>
    <property type="project" value="UniProtKB-KW"/>
</dbReference>
<dbReference type="GO" id="GO:0003879">
    <property type="term" value="F:ATP phosphoribosyltransferase activity"/>
    <property type="evidence" value="ECO:0007669"/>
    <property type="project" value="UniProtKB-UniRule"/>
</dbReference>
<dbReference type="GO" id="GO:0000105">
    <property type="term" value="P:L-histidine biosynthetic process"/>
    <property type="evidence" value="ECO:0007669"/>
    <property type="project" value="UniProtKB-UniRule"/>
</dbReference>
<dbReference type="CDD" id="cd13595">
    <property type="entry name" value="PBP2_HisGs"/>
    <property type="match status" value="1"/>
</dbReference>
<dbReference type="FunFam" id="3.40.190.10:FF:000011">
    <property type="entry name" value="ATP phosphoribosyltransferase"/>
    <property type="match status" value="1"/>
</dbReference>
<dbReference type="Gene3D" id="3.40.190.10">
    <property type="entry name" value="Periplasmic binding protein-like II"/>
    <property type="match status" value="2"/>
</dbReference>
<dbReference type="HAMAP" id="MF_01018">
    <property type="entry name" value="HisG_Short"/>
    <property type="match status" value="1"/>
</dbReference>
<dbReference type="InterPro" id="IPR013820">
    <property type="entry name" value="ATP_PRibTrfase_cat"/>
</dbReference>
<dbReference type="InterPro" id="IPR018198">
    <property type="entry name" value="ATP_PRibTrfase_CS"/>
</dbReference>
<dbReference type="InterPro" id="IPR001348">
    <property type="entry name" value="ATP_PRibTrfase_HisG"/>
</dbReference>
<dbReference type="InterPro" id="IPR024893">
    <property type="entry name" value="ATP_PRibTrfase_HisG_short"/>
</dbReference>
<dbReference type="NCBIfam" id="TIGR00070">
    <property type="entry name" value="hisG"/>
    <property type="match status" value="1"/>
</dbReference>
<dbReference type="PANTHER" id="PTHR21403:SF8">
    <property type="entry name" value="ATP PHOSPHORIBOSYLTRANSFERASE"/>
    <property type="match status" value="1"/>
</dbReference>
<dbReference type="PANTHER" id="PTHR21403">
    <property type="entry name" value="ATP PHOSPHORIBOSYLTRANSFERASE ATP-PRTASE"/>
    <property type="match status" value="1"/>
</dbReference>
<dbReference type="Pfam" id="PF01634">
    <property type="entry name" value="HisG"/>
    <property type="match status" value="1"/>
</dbReference>
<dbReference type="SUPFAM" id="SSF53850">
    <property type="entry name" value="Periplasmic binding protein-like II"/>
    <property type="match status" value="1"/>
</dbReference>
<dbReference type="PROSITE" id="PS01316">
    <property type="entry name" value="ATP_P_PHORIBOSYLTR"/>
    <property type="match status" value="1"/>
</dbReference>
<gene>
    <name evidence="1" type="primary">hisG</name>
    <name type="ordered locus">NGO_1238</name>
</gene>
<keyword id="KW-0028">Amino-acid biosynthesis</keyword>
<keyword id="KW-0067">ATP-binding</keyword>
<keyword id="KW-0963">Cytoplasm</keyword>
<keyword id="KW-0328">Glycosyltransferase</keyword>
<keyword id="KW-0368">Histidine biosynthesis</keyword>
<keyword id="KW-0547">Nucleotide-binding</keyword>
<keyword id="KW-1185">Reference proteome</keyword>
<keyword id="KW-0808">Transferase</keyword>